<comment type="function">
    <text evidence="1">Part of the high-affinity ATP-driven potassium transport (or Kdp) system, which catalyzes the hydrolysis of ATP coupled with the electrogenic transport of potassium into the cytoplasm. This subunit binds the periplasmic potassium ions and delivers the ions to the membrane domain of KdpB through an intramembrane tunnel.</text>
</comment>
<comment type="subunit">
    <text evidence="1">The system is composed of three essential subunits: KdpA, KdpB and KdpC.</text>
</comment>
<comment type="subcellular location">
    <subcellularLocation>
        <location evidence="1">Cell inner membrane</location>
        <topology evidence="1">Multi-pass membrane protein</topology>
    </subcellularLocation>
</comment>
<comment type="similarity">
    <text evidence="1">Belongs to the KdpA family.</text>
</comment>
<proteinExistence type="inferred from homology"/>
<gene>
    <name evidence="1" type="primary">kdpA</name>
    <name type="ordered locus">Mchl_0177</name>
</gene>
<dbReference type="EMBL" id="CP001298">
    <property type="protein sequence ID" value="ACK81123.1"/>
    <property type="molecule type" value="Genomic_DNA"/>
</dbReference>
<dbReference type="RefSeq" id="WP_012605330.1">
    <property type="nucleotide sequence ID" value="NC_011757.1"/>
</dbReference>
<dbReference type="SMR" id="B7L1M9"/>
<dbReference type="KEGG" id="mch:Mchl_0177"/>
<dbReference type="HOGENOM" id="CLU_018614_3_0_5"/>
<dbReference type="Proteomes" id="UP000002385">
    <property type="component" value="Chromosome"/>
</dbReference>
<dbReference type="GO" id="GO:0005886">
    <property type="term" value="C:plasma membrane"/>
    <property type="evidence" value="ECO:0007669"/>
    <property type="project" value="UniProtKB-SubCell"/>
</dbReference>
<dbReference type="GO" id="GO:0008556">
    <property type="term" value="F:P-type potassium transmembrane transporter activity"/>
    <property type="evidence" value="ECO:0007669"/>
    <property type="project" value="InterPro"/>
</dbReference>
<dbReference type="GO" id="GO:0030955">
    <property type="term" value="F:potassium ion binding"/>
    <property type="evidence" value="ECO:0007669"/>
    <property type="project" value="UniProtKB-UniRule"/>
</dbReference>
<dbReference type="HAMAP" id="MF_00275">
    <property type="entry name" value="KdpA"/>
    <property type="match status" value="1"/>
</dbReference>
<dbReference type="InterPro" id="IPR004623">
    <property type="entry name" value="KdpA"/>
</dbReference>
<dbReference type="NCBIfam" id="TIGR00680">
    <property type="entry name" value="kdpA"/>
    <property type="match status" value="1"/>
</dbReference>
<dbReference type="PANTHER" id="PTHR30607">
    <property type="entry name" value="POTASSIUM-TRANSPORTING ATPASE A CHAIN"/>
    <property type="match status" value="1"/>
</dbReference>
<dbReference type="PANTHER" id="PTHR30607:SF2">
    <property type="entry name" value="POTASSIUM-TRANSPORTING ATPASE POTASSIUM-BINDING SUBUNIT"/>
    <property type="match status" value="1"/>
</dbReference>
<dbReference type="Pfam" id="PF03814">
    <property type="entry name" value="KdpA"/>
    <property type="match status" value="1"/>
</dbReference>
<dbReference type="PIRSF" id="PIRSF001294">
    <property type="entry name" value="K_ATPaseA"/>
    <property type="match status" value="1"/>
</dbReference>
<name>KDPA_METC4</name>
<feature type="chain" id="PRO_1000190741" description="Potassium-transporting ATPase potassium-binding subunit">
    <location>
        <begin position="1"/>
        <end position="571"/>
    </location>
</feature>
<feature type="transmembrane region" description="Helical" evidence="1">
    <location>
        <begin position="5"/>
        <end position="25"/>
    </location>
</feature>
<feature type="transmembrane region" description="Helical" evidence="1">
    <location>
        <begin position="64"/>
        <end position="84"/>
    </location>
</feature>
<feature type="transmembrane region" description="Helical" evidence="1">
    <location>
        <begin position="136"/>
        <end position="156"/>
    </location>
</feature>
<feature type="transmembrane region" description="Helical" evidence="1">
    <location>
        <begin position="179"/>
        <end position="199"/>
    </location>
</feature>
<feature type="transmembrane region" description="Helical" evidence="1">
    <location>
        <begin position="220"/>
        <end position="240"/>
    </location>
</feature>
<feature type="transmembrane region" description="Helical" evidence="1">
    <location>
        <begin position="254"/>
        <end position="274"/>
    </location>
</feature>
<feature type="transmembrane region" description="Helical" evidence="1">
    <location>
        <begin position="285"/>
        <end position="305"/>
    </location>
</feature>
<feature type="transmembrane region" description="Helical" evidence="1">
    <location>
        <begin position="330"/>
        <end position="350"/>
    </location>
</feature>
<feature type="transmembrane region" description="Helical" evidence="1">
    <location>
        <begin position="375"/>
        <end position="395"/>
    </location>
</feature>
<feature type="transmembrane region" description="Helical" evidence="1">
    <location>
        <begin position="421"/>
        <end position="441"/>
    </location>
</feature>
<feature type="transmembrane region" description="Helical" evidence="1">
    <location>
        <begin position="488"/>
        <end position="508"/>
    </location>
</feature>
<feature type="transmembrane region" description="Helical" evidence="1">
    <location>
        <begin position="527"/>
        <end position="547"/>
    </location>
</feature>
<sequence length="571" mass="59336">MTLNGWMQIALYGAVVLALVRPLGGYMTRVFNGERTLLSPALAPIERGLYRISGIDARQEQTWLAYAGAMILFNVAGFVLLYALLRLQALLPFNPADQAAVAPDLAFNTATSFVTNTNWQSYGGETTLSYLSQMLGLTHQNFVSAASGMAVAVALIRGFARASTKTLGSFWVDMTRATLYVLLPLSTVLALFYVSQGMPQTLSPYVEATTLEGAKQTIAVGPVASQVAIKMLGTNGGGFFNANAAHPFENPTALSNFLQMLSIFVIGAALTNVFGRMVGDERQGWAILAAMGLLFLAGVTVTYWAEANAHGVLSNLGLTGGNMEGKEVRFGIAASALFAVITTAASCGAVNAMHDSFTALGGLIPLLNMQLGEVIIGGVGAGLYGMLVFVVVAIFVAGLMVGRTPEYLGKKIEAREVKMAMLGILCLPLMMLGFTAIATVVPAGLAGPANAGPHGFSEILYAYTSAAANNGSAFGGLTANTLFYNTTLAIGMLVGRFFVKIPVLAIAGSLAAKKRLPASAGTFPTHGGLFVGLLVGVVLIIGGLTFFPALALGPVVEHFAGAAGQTFATGG</sequence>
<reference key="1">
    <citation type="submission" date="2008-12" db="EMBL/GenBank/DDBJ databases">
        <title>Complete sequence of chromosome of Methylobacterium chloromethanicum CM4.</title>
        <authorList>
            <consortium name="US DOE Joint Genome Institute"/>
            <person name="Lucas S."/>
            <person name="Copeland A."/>
            <person name="Lapidus A."/>
            <person name="Glavina del Rio T."/>
            <person name="Dalin E."/>
            <person name="Tice H."/>
            <person name="Bruce D."/>
            <person name="Goodwin L."/>
            <person name="Pitluck S."/>
            <person name="Chertkov O."/>
            <person name="Brettin T."/>
            <person name="Detter J.C."/>
            <person name="Han C."/>
            <person name="Larimer F."/>
            <person name="Land M."/>
            <person name="Hauser L."/>
            <person name="Kyrpides N."/>
            <person name="Mikhailova N."/>
            <person name="Marx C."/>
            <person name="Richardson P."/>
        </authorList>
    </citation>
    <scope>NUCLEOTIDE SEQUENCE [LARGE SCALE GENOMIC DNA]</scope>
    <source>
        <strain>CM4 / NCIMB 13688</strain>
    </source>
</reference>
<keyword id="KW-0997">Cell inner membrane</keyword>
<keyword id="KW-1003">Cell membrane</keyword>
<keyword id="KW-0406">Ion transport</keyword>
<keyword id="KW-0472">Membrane</keyword>
<keyword id="KW-0630">Potassium</keyword>
<keyword id="KW-0633">Potassium transport</keyword>
<keyword id="KW-0812">Transmembrane</keyword>
<keyword id="KW-1133">Transmembrane helix</keyword>
<keyword id="KW-0813">Transport</keyword>
<organism>
    <name type="scientific">Methylorubrum extorquens (strain CM4 / NCIMB 13688)</name>
    <name type="common">Methylobacterium extorquens</name>
    <dbReference type="NCBI Taxonomy" id="440085"/>
    <lineage>
        <taxon>Bacteria</taxon>
        <taxon>Pseudomonadati</taxon>
        <taxon>Pseudomonadota</taxon>
        <taxon>Alphaproteobacteria</taxon>
        <taxon>Hyphomicrobiales</taxon>
        <taxon>Methylobacteriaceae</taxon>
        <taxon>Methylorubrum</taxon>
    </lineage>
</organism>
<protein>
    <recommendedName>
        <fullName evidence="1">Potassium-transporting ATPase potassium-binding subunit</fullName>
    </recommendedName>
    <alternativeName>
        <fullName evidence="1">ATP phosphohydrolase [potassium-transporting] A chain</fullName>
    </alternativeName>
    <alternativeName>
        <fullName evidence="1">Potassium-binding and translocating subunit A</fullName>
    </alternativeName>
    <alternativeName>
        <fullName evidence="1">Potassium-translocating ATPase A chain</fullName>
    </alternativeName>
</protein>
<accession>B7L1M9</accession>
<evidence type="ECO:0000255" key="1">
    <source>
        <dbReference type="HAMAP-Rule" id="MF_00275"/>
    </source>
</evidence>